<feature type="peptide" id="PRO_0000451989" description="Mu-theraphotoxin-Hsp1a">
    <location>
        <begin position="1"/>
        <end position="28"/>
    </location>
</feature>
<feature type="modified residue" description="Asparagine amide" evidence="2">
    <location>
        <position position="28"/>
    </location>
</feature>
<feature type="disulfide bond" evidence="1">
    <location>
        <begin position="2"/>
        <end position="16"/>
    </location>
</feature>
<feature type="disulfide bond" evidence="1">
    <location>
        <begin position="9"/>
        <end position="21"/>
    </location>
</feature>
<feature type="disulfide bond" evidence="1">
    <location>
        <begin position="15"/>
        <end position="25"/>
    </location>
</feature>
<keyword id="KW-0027">Amidation</keyword>
<keyword id="KW-0903">Direct protein sequencing</keyword>
<keyword id="KW-1015">Disulfide bond</keyword>
<keyword id="KW-0872">Ion channel impairing toxin</keyword>
<keyword id="KW-0960">Knottin</keyword>
<keyword id="KW-0528">Neurotoxin</keyword>
<keyword id="KW-0964">Secreted</keyword>
<keyword id="KW-0800">Toxin</keyword>
<keyword id="KW-0738">Voltage-gated sodium channel impairing toxin</keyword>
<organism>
    <name type="scientific">Homoeomma sp.</name>
    <name type="common">Peruvian tarantula</name>
    <dbReference type="NCBI Taxonomy" id="2774376"/>
    <lineage>
        <taxon>Eukaryota</taxon>
        <taxon>Metazoa</taxon>
        <taxon>Ecdysozoa</taxon>
        <taxon>Arthropoda</taxon>
        <taxon>Chelicerata</taxon>
        <taxon>Arachnida</taxon>
        <taxon>Araneae</taxon>
        <taxon>Mygalomorphae</taxon>
        <taxon>Theraphosidae</taxon>
        <taxon>Homoeomma</taxon>
    </lineage>
</organism>
<protein>
    <recommendedName>
        <fullName evidence="4">Mu-theraphotoxin-Hsp1a</fullName>
        <shortName evidence="3">Hsp1a</shortName>
        <shortName evidence="4">Mu-TRTX-Hsp1a</shortName>
    </recommendedName>
</protein>
<sequence length="28" mass="3398">YCQKFLWTCDSERPCCEGLVCRLWCKIN</sequence>
<name>PM1A_HOMSP</name>
<reference key="1">
    <citation type="journal article" date="2019" name="Bioconj. Chem.">
        <title>Fluorescence imaging of peripheral nerves by a Nav1.7-targeted inhibitor cystine knot peptide.</title>
        <authorList>
            <person name="Gonzales J."/>
            <person name="Demetrio de Souza Franca P."/>
            <person name="Jiang Y."/>
            <person name="Pirovano G."/>
            <person name="Kossatz S."/>
            <person name="Guru N."/>
            <person name="Yarilin D."/>
            <person name="Agwa A.J."/>
            <person name="Schroeder C.I."/>
            <person name="Patel S.G."/>
            <person name="Ganly I."/>
            <person name="King G.F."/>
            <person name="Reiner T."/>
        </authorList>
    </citation>
    <scope>PROTEIN SEQUENCE</scope>
    <scope>SUBCELLULAR LOCATION</scope>
    <scope>SYNTHESIS</scope>
    <scope>AMIDATION AT ASN-28</scope>
    <scope>BIOTECHNOLOGY</scope>
    <source>
        <tissue>Venom</tissue>
    </source>
</reference>
<proteinExistence type="evidence at protein level"/>
<accession>P0DQO2</accession>
<comment type="function">
    <text evidence="2">Potent and selective inhibitor of Nav1.7/SCN9A sodium channels. Inhibits Nav1.7/SCN9A peak current (IC(50)=13 nM) (PubMed:31647222). In vivo, does not induce visible signs of toxicity when intravenously injected into mice (PubMed:31647222).</text>
</comment>
<comment type="subcellular location">
    <subcellularLocation>
        <location evidence="2 5">Secreted</location>
    </subcellularLocation>
</comment>
<comment type="tissue specificity">
    <text evidence="5">Expressed by the venom gland.</text>
</comment>
<comment type="domain">
    <text evidence="1">The presence of a 'disulfide through disulfide knot' structurally defines this protein as a knottin.</text>
</comment>
<comment type="biotechnology">
    <text evidence="5">When conjugated with a fluorophore, could be used as a tracer in surgery to discriminate nerves from their surrounding tissues, particularly during tumor resections or after traumatic injuries. The dye is conjugated to Lys-4 residue and this synthetic peptide shows only a small decrease in ability to inhibit Nav1.7/SCN9A compared to native peptide.</text>
</comment>
<comment type="similarity">
    <text evidence="4">Belongs to the neurotoxin 30 (phrixotoxin) family.</text>
</comment>
<evidence type="ECO:0000250" key="1">
    <source>
        <dbReference type="UniProtKB" id="P60273"/>
    </source>
</evidence>
<evidence type="ECO:0000269" key="2">
    <source>
    </source>
</evidence>
<evidence type="ECO:0000303" key="3">
    <source>
    </source>
</evidence>
<evidence type="ECO:0000305" key="4"/>
<evidence type="ECO:0000305" key="5">
    <source>
    </source>
</evidence>
<dbReference type="SMR" id="P0DQO2"/>
<dbReference type="GO" id="GO:0005576">
    <property type="term" value="C:extracellular region"/>
    <property type="evidence" value="ECO:0007669"/>
    <property type="project" value="UniProtKB-SubCell"/>
</dbReference>
<dbReference type="GO" id="GO:0008200">
    <property type="term" value="F:ion channel inhibitor activity"/>
    <property type="evidence" value="ECO:0007669"/>
    <property type="project" value="InterPro"/>
</dbReference>
<dbReference type="GO" id="GO:0017080">
    <property type="term" value="F:sodium channel regulator activity"/>
    <property type="evidence" value="ECO:0007669"/>
    <property type="project" value="UniProtKB-KW"/>
</dbReference>
<dbReference type="GO" id="GO:0090729">
    <property type="term" value="F:toxin activity"/>
    <property type="evidence" value="ECO:0007669"/>
    <property type="project" value="UniProtKB-KW"/>
</dbReference>
<dbReference type="InterPro" id="IPR011696">
    <property type="entry name" value="Huwentoxin-1"/>
</dbReference>
<dbReference type="Pfam" id="PF07740">
    <property type="entry name" value="Toxin_12"/>
    <property type="match status" value="1"/>
</dbReference>
<dbReference type="SUPFAM" id="SSF57059">
    <property type="entry name" value="omega toxin-like"/>
    <property type="match status" value="1"/>
</dbReference>